<gene>
    <name type="primary">hssS</name>
    <name type="ordered locus">SAV2362</name>
</gene>
<evidence type="ECO:0000250" key="1"/>
<evidence type="ECO:0000255" key="2"/>
<evidence type="ECO:0000255" key="3">
    <source>
        <dbReference type="PROSITE-ProRule" id="PRU00102"/>
    </source>
</evidence>
<evidence type="ECO:0000255" key="4">
    <source>
        <dbReference type="PROSITE-ProRule" id="PRU00107"/>
    </source>
</evidence>
<feature type="chain" id="PRO_0000331344" description="Heme sensor protein HssS">
    <location>
        <begin position="1"/>
        <end position="457"/>
    </location>
</feature>
<feature type="transmembrane region" description="Helical" evidence="2">
    <location>
        <begin position="9"/>
        <end position="29"/>
    </location>
</feature>
<feature type="transmembrane region" description="Helical" evidence="2">
    <location>
        <begin position="164"/>
        <end position="184"/>
    </location>
</feature>
<feature type="domain" description="HAMP" evidence="3">
    <location>
        <begin position="186"/>
        <end position="238"/>
    </location>
</feature>
<feature type="domain" description="Histidine kinase" evidence="4">
    <location>
        <begin position="246"/>
        <end position="456"/>
    </location>
</feature>
<feature type="modified residue" description="Phosphohistidine; by autocatalysis" evidence="4">
    <location>
        <position position="249"/>
    </location>
</feature>
<comment type="function">
    <text evidence="1">Member of the two-component regulatory system HssS/HssR involved in intracellular heme homeostasis and tempering of staphylococcal virulence. HssS functions as a heme sensor histidine kinase which is autophosphorylated at a histidine residue and transfers its phosphate group to an aspartate residue of HssR. HssR/HssS activates the expression of hrtAB, an efflux pump, in response to extracellular heme, hemin, hemoglobin or blood (By similarity).</text>
</comment>
<comment type="catalytic activity">
    <reaction>
        <text>ATP + protein L-histidine = ADP + protein N-phospho-L-histidine.</text>
        <dbReference type="EC" id="2.7.13.3"/>
    </reaction>
</comment>
<comment type="subcellular location">
    <subcellularLocation>
        <location evidence="1">Cell membrane</location>
        <topology evidence="1">Multi-pass membrane protein</topology>
    </subcellularLocation>
</comment>
<comment type="PTM">
    <text evidence="1">Autophosphorylated.</text>
</comment>
<protein>
    <recommendedName>
        <fullName>Heme sensor protein HssS</fullName>
        <ecNumber>2.7.13.3</ecNumber>
    </recommendedName>
</protein>
<keyword id="KW-0067">ATP-binding</keyword>
<keyword id="KW-1003">Cell membrane</keyword>
<keyword id="KW-0418">Kinase</keyword>
<keyword id="KW-0472">Membrane</keyword>
<keyword id="KW-0547">Nucleotide-binding</keyword>
<keyword id="KW-0597">Phosphoprotein</keyword>
<keyword id="KW-0808">Transferase</keyword>
<keyword id="KW-0812">Transmembrane</keyword>
<keyword id="KW-1133">Transmembrane helix</keyword>
<keyword id="KW-0902">Two-component regulatory system</keyword>
<keyword id="KW-0843">Virulence</keyword>
<dbReference type="EC" id="2.7.13.3"/>
<dbReference type="EMBL" id="BA000017">
    <property type="protein sequence ID" value="BAB58524.1"/>
    <property type="molecule type" value="Genomic_DNA"/>
</dbReference>
<dbReference type="RefSeq" id="WP_000477338.1">
    <property type="nucleotide sequence ID" value="NC_002758.2"/>
</dbReference>
<dbReference type="SMR" id="Q99RR5"/>
<dbReference type="KEGG" id="sav:SAV2362"/>
<dbReference type="HOGENOM" id="CLU_000445_89_6_9"/>
<dbReference type="PhylomeDB" id="Q99RR5"/>
<dbReference type="Proteomes" id="UP000002481">
    <property type="component" value="Chromosome"/>
</dbReference>
<dbReference type="GO" id="GO:0005886">
    <property type="term" value="C:plasma membrane"/>
    <property type="evidence" value="ECO:0007669"/>
    <property type="project" value="UniProtKB-SubCell"/>
</dbReference>
<dbReference type="GO" id="GO:0005524">
    <property type="term" value="F:ATP binding"/>
    <property type="evidence" value="ECO:0007669"/>
    <property type="project" value="UniProtKB-KW"/>
</dbReference>
<dbReference type="GO" id="GO:0000155">
    <property type="term" value="F:phosphorelay sensor kinase activity"/>
    <property type="evidence" value="ECO:0007669"/>
    <property type="project" value="InterPro"/>
</dbReference>
<dbReference type="CDD" id="cd06225">
    <property type="entry name" value="HAMP"/>
    <property type="match status" value="1"/>
</dbReference>
<dbReference type="CDD" id="cd00082">
    <property type="entry name" value="HisKA"/>
    <property type="match status" value="1"/>
</dbReference>
<dbReference type="FunFam" id="3.30.565.10:FF:000090">
    <property type="entry name" value="Heme sensor histidine kinase HssS"/>
    <property type="match status" value="1"/>
</dbReference>
<dbReference type="Gene3D" id="1.10.287.130">
    <property type="match status" value="1"/>
</dbReference>
<dbReference type="Gene3D" id="6.10.340.10">
    <property type="match status" value="1"/>
</dbReference>
<dbReference type="Gene3D" id="3.30.565.10">
    <property type="entry name" value="Histidine kinase-like ATPase, C-terminal domain"/>
    <property type="match status" value="1"/>
</dbReference>
<dbReference type="InterPro" id="IPR050398">
    <property type="entry name" value="Bact_Sensor_His_Kinase"/>
</dbReference>
<dbReference type="InterPro" id="IPR003660">
    <property type="entry name" value="HAMP_dom"/>
</dbReference>
<dbReference type="InterPro" id="IPR036890">
    <property type="entry name" value="HATPase_C_sf"/>
</dbReference>
<dbReference type="InterPro" id="IPR005467">
    <property type="entry name" value="His_kinase_dom"/>
</dbReference>
<dbReference type="InterPro" id="IPR003661">
    <property type="entry name" value="HisK_dim/P_dom"/>
</dbReference>
<dbReference type="InterPro" id="IPR036097">
    <property type="entry name" value="HisK_dim/P_sf"/>
</dbReference>
<dbReference type="InterPro" id="IPR004358">
    <property type="entry name" value="Sig_transdc_His_kin-like_C"/>
</dbReference>
<dbReference type="PANTHER" id="PTHR45528:SF11">
    <property type="entry name" value="HISTIDINE KINASE"/>
    <property type="match status" value="1"/>
</dbReference>
<dbReference type="PANTHER" id="PTHR45528">
    <property type="entry name" value="SENSOR HISTIDINE KINASE CPXA"/>
    <property type="match status" value="1"/>
</dbReference>
<dbReference type="Pfam" id="PF00672">
    <property type="entry name" value="HAMP"/>
    <property type="match status" value="1"/>
</dbReference>
<dbReference type="Pfam" id="PF02518">
    <property type="entry name" value="HATPase_c"/>
    <property type="match status" value="1"/>
</dbReference>
<dbReference type="Pfam" id="PF00512">
    <property type="entry name" value="HisKA"/>
    <property type="match status" value="1"/>
</dbReference>
<dbReference type="PRINTS" id="PR00344">
    <property type="entry name" value="BCTRLSENSOR"/>
</dbReference>
<dbReference type="SMART" id="SM00304">
    <property type="entry name" value="HAMP"/>
    <property type="match status" value="1"/>
</dbReference>
<dbReference type="SMART" id="SM00387">
    <property type="entry name" value="HATPase_c"/>
    <property type="match status" value="1"/>
</dbReference>
<dbReference type="SMART" id="SM00388">
    <property type="entry name" value="HisKA"/>
    <property type="match status" value="1"/>
</dbReference>
<dbReference type="SUPFAM" id="SSF55874">
    <property type="entry name" value="ATPase domain of HSP90 chaperone/DNA topoisomerase II/histidine kinase"/>
    <property type="match status" value="1"/>
</dbReference>
<dbReference type="SUPFAM" id="SSF158472">
    <property type="entry name" value="HAMP domain-like"/>
    <property type="match status" value="1"/>
</dbReference>
<dbReference type="SUPFAM" id="SSF47384">
    <property type="entry name" value="Homodimeric domain of signal transducing histidine kinase"/>
    <property type="match status" value="1"/>
</dbReference>
<dbReference type="PROSITE" id="PS50885">
    <property type="entry name" value="HAMP"/>
    <property type="match status" value="1"/>
</dbReference>
<dbReference type="PROSITE" id="PS50109">
    <property type="entry name" value="HIS_KIN"/>
    <property type="match status" value="1"/>
</dbReference>
<proteinExistence type="inferred from homology"/>
<accession>Q99RR5</accession>
<organism>
    <name type="scientific">Staphylococcus aureus (strain Mu50 / ATCC 700699)</name>
    <dbReference type="NCBI Taxonomy" id="158878"/>
    <lineage>
        <taxon>Bacteria</taxon>
        <taxon>Bacillati</taxon>
        <taxon>Bacillota</taxon>
        <taxon>Bacilli</taxon>
        <taxon>Bacillales</taxon>
        <taxon>Staphylococcaceae</taxon>
        <taxon>Staphylococcus</taxon>
    </lineage>
</organism>
<name>HSSS_STAAM</name>
<reference key="1">
    <citation type="journal article" date="2001" name="Lancet">
        <title>Whole genome sequencing of meticillin-resistant Staphylococcus aureus.</title>
        <authorList>
            <person name="Kuroda M."/>
            <person name="Ohta T."/>
            <person name="Uchiyama I."/>
            <person name="Baba T."/>
            <person name="Yuzawa H."/>
            <person name="Kobayashi I."/>
            <person name="Cui L."/>
            <person name="Oguchi A."/>
            <person name="Aoki K."/>
            <person name="Nagai Y."/>
            <person name="Lian J.-Q."/>
            <person name="Ito T."/>
            <person name="Kanamori M."/>
            <person name="Matsumaru H."/>
            <person name="Maruyama A."/>
            <person name="Murakami H."/>
            <person name="Hosoyama A."/>
            <person name="Mizutani-Ui Y."/>
            <person name="Takahashi N.K."/>
            <person name="Sawano T."/>
            <person name="Inoue R."/>
            <person name="Kaito C."/>
            <person name="Sekimizu K."/>
            <person name="Hirakawa H."/>
            <person name="Kuhara S."/>
            <person name="Goto S."/>
            <person name="Yabuzaki J."/>
            <person name="Kanehisa M."/>
            <person name="Yamashita A."/>
            <person name="Oshima K."/>
            <person name="Furuya K."/>
            <person name="Yoshino C."/>
            <person name="Shiba T."/>
            <person name="Hattori M."/>
            <person name="Ogasawara N."/>
            <person name="Hayashi H."/>
            <person name="Hiramatsu K."/>
        </authorList>
    </citation>
    <scope>NUCLEOTIDE SEQUENCE [LARGE SCALE GENOMIC DNA]</scope>
    <source>
        <strain>Mu50 / ATCC 700699</strain>
    </source>
</reference>
<sequence>MFKTLYARIAIYSITVILFSALISFVLTNVYYHYNLKASNDAKIMKTLKEARQYEQSAKPTHIQQYFKHLGQMNYQIMTVDQKGHKTFYGEPFREDTLSQNAINNVLNNKDYHGIKDKPFALFVTGFFDNVTDNTVGINFKTKDGSIAVFMRPDIGETFSEFRTFLAVLLMLLLFISISLVIASTYSIIRPVKKLKLATERLIDGDFETPIKQTRKDEIGTLQYHFNKMRESLGQVDQMRQHFVQNVSHEIKTPLTHIHHLLSELQQTSDKTLRQQYINDIYTITTQLSGLTTELLLLSELDNHQHLLFDDKIQVDQLIKDIIRHEQFAADEKSLIILADLESINFLGNQRLLHQALSNLLINAIKYTDVGGAIDIALQHSHNNIIFTISNDGSPISPQAEARLFERFYKVSKHDNSNGLGLAITKSIIELHHGTIQFTQSNEYVTTFTITLPNNSH</sequence>